<name>IF3_STRP3</name>
<reference key="1">
    <citation type="journal article" date="2002" name="Proc. Natl. Acad. Sci. U.S.A.">
        <title>Genome sequence of a serotype M3 strain of group A Streptococcus: phage-encoded toxins, the high-virulence phenotype, and clone emergence.</title>
        <authorList>
            <person name="Beres S.B."/>
            <person name="Sylva G.L."/>
            <person name="Barbian K.D."/>
            <person name="Lei B."/>
            <person name="Hoff J.S."/>
            <person name="Mammarella N.D."/>
            <person name="Liu M.-Y."/>
            <person name="Smoot J.C."/>
            <person name="Porcella S.F."/>
            <person name="Parkins L.D."/>
            <person name="Campbell D.S."/>
            <person name="Smith T.M."/>
            <person name="McCormick J.K."/>
            <person name="Leung D.Y.M."/>
            <person name="Schlievert P.M."/>
            <person name="Musser J.M."/>
        </authorList>
    </citation>
    <scope>NUCLEOTIDE SEQUENCE [LARGE SCALE GENOMIC DNA]</scope>
    <source>
        <strain>ATCC BAA-595 / MGAS315</strain>
    </source>
</reference>
<gene>
    <name evidence="1" type="primary">infC</name>
    <name type="ordered locus">SpyM3_0538</name>
</gene>
<keyword id="KW-0963">Cytoplasm</keyword>
<keyword id="KW-0396">Initiation factor</keyword>
<keyword id="KW-0648">Protein biosynthesis</keyword>
<proteinExistence type="inferred from homology"/>
<feature type="chain" id="PRO_0000177591" description="Translation initiation factor IF-3">
    <location>
        <begin position="1"/>
        <end position="176"/>
    </location>
</feature>
<evidence type="ECO:0000255" key="1">
    <source>
        <dbReference type="HAMAP-Rule" id="MF_00080"/>
    </source>
</evidence>
<accession>P0DB86</accession>
<accession>P58081</accession>
<accession>P65147</accession>
<organism>
    <name type="scientific">Streptococcus pyogenes serotype M3 (strain ATCC BAA-595 / MGAS315)</name>
    <dbReference type="NCBI Taxonomy" id="198466"/>
    <lineage>
        <taxon>Bacteria</taxon>
        <taxon>Bacillati</taxon>
        <taxon>Bacillota</taxon>
        <taxon>Bacilli</taxon>
        <taxon>Lactobacillales</taxon>
        <taxon>Streptococcaceae</taxon>
        <taxon>Streptococcus</taxon>
    </lineage>
</organism>
<comment type="function">
    <text evidence="1">IF-3 binds to the 30S ribosomal subunit and shifts the equilibrium between 70S ribosomes and their 50S and 30S subunits in favor of the free subunits, thus enhancing the availability of 30S subunits on which protein synthesis initiation begins.</text>
</comment>
<comment type="subunit">
    <text evidence="1">Monomer.</text>
</comment>
<comment type="subcellular location">
    <subcellularLocation>
        <location evidence="1">Cytoplasm</location>
    </subcellularLocation>
</comment>
<comment type="similarity">
    <text evidence="1">Belongs to the IF-3 family.</text>
</comment>
<dbReference type="EMBL" id="AE014074">
    <property type="protein sequence ID" value="AAM79145.1"/>
    <property type="molecule type" value="Genomic_DNA"/>
</dbReference>
<dbReference type="RefSeq" id="WP_002985152.1">
    <property type="nucleotide sequence ID" value="NC_004070.1"/>
</dbReference>
<dbReference type="SMR" id="P0DB86"/>
<dbReference type="GeneID" id="69901077"/>
<dbReference type="KEGG" id="spg:SpyM3_0538"/>
<dbReference type="HOGENOM" id="CLU_054919_3_2_9"/>
<dbReference type="Proteomes" id="UP000000564">
    <property type="component" value="Chromosome"/>
</dbReference>
<dbReference type="GO" id="GO:0005829">
    <property type="term" value="C:cytosol"/>
    <property type="evidence" value="ECO:0007669"/>
    <property type="project" value="TreeGrafter"/>
</dbReference>
<dbReference type="GO" id="GO:0016020">
    <property type="term" value="C:membrane"/>
    <property type="evidence" value="ECO:0007669"/>
    <property type="project" value="TreeGrafter"/>
</dbReference>
<dbReference type="GO" id="GO:0043022">
    <property type="term" value="F:ribosome binding"/>
    <property type="evidence" value="ECO:0007669"/>
    <property type="project" value="TreeGrafter"/>
</dbReference>
<dbReference type="GO" id="GO:0003743">
    <property type="term" value="F:translation initiation factor activity"/>
    <property type="evidence" value="ECO:0007669"/>
    <property type="project" value="UniProtKB-UniRule"/>
</dbReference>
<dbReference type="GO" id="GO:0032790">
    <property type="term" value="P:ribosome disassembly"/>
    <property type="evidence" value="ECO:0007669"/>
    <property type="project" value="TreeGrafter"/>
</dbReference>
<dbReference type="FunFam" id="3.10.20.80:FF:000001">
    <property type="entry name" value="Translation initiation factor IF-3"/>
    <property type="match status" value="1"/>
</dbReference>
<dbReference type="FunFam" id="3.30.110.10:FF:000001">
    <property type="entry name" value="Translation initiation factor IF-3"/>
    <property type="match status" value="1"/>
</dbReference>
<dbReference type="Gene3D" id="3.30.110.10">
    <property type="entry name" value="Translation initiation factor 3 (IF-3), C-terminal domain"/>
    <property type="match status" value="1"/>
</dbReference>
<dbReference type="Gene3D" id="3.10.20.80">
    <property type="entry name" value="Translation initiation factor 3 (IF-3), N-terminal domain"/>
    <property type="match status" value="1"/>
</dbReference>
<dbReference type="HAMAP" id="MF_00080">
    <property type="entry name" value="IF_3"/>
    <property type="match status" value="1"/>
</dbReference>
<dbReference type="InterPro" id="IPR036788">
    <property type="entry name" value="T_IF-3_C_sf"/>
</dbReference>
<dbReference type="InterPro" id="IPR036787">
    <property type="entry name" value="T_IF-3_N_sf"/>
</dbReference>
<dbReference type="InterPro" id="IPR019813">
    <property type="entry name" value="Translation_initiation_fac3_CS"/>
</dbReference>
<dbReference type="InterPro" id="IPR001288">
    <property type="entry name" value="Translation_initiation_fac_3"/>
</dbReference>
<dbReference type="InterPro" id="IPR019815">
    <property type="entry name" value="Translation_initiation_fac_3_C"/>
</dbReference>
<dbReference type="InterPro" id="IPR019814">
    <property type="entry name" value="Translation_initiation_fac_3_N"/>
</dbReference>
<dbReference type="NCBIfam" id="TIGR00168">
    <property type="entry name" value="infC"/>
    <property type="match status" value="1"/>
</dbReference>
<dbReference type="PANTHER" id="PTHR10938">
    <property type="entry name" value="TRANSLATION INITIATION FACTOR IF-3"/>
    <property type="match status" value="1"/>
</dbReference>
<dbReference type="PANTHER" id="PTHR10938:SF0">
    <property type="entry name" value="TRANSLATION INITIATION FACTOR IF-3, MITOCHONDRIAL"/>
    <property type="match status" value="1"/>
</dbReference>
<dbReference type="Pfam" id="PF00707">
    <property type="entry name" value="IF3_C"/>
    <property type="match status" value="1"/>
</dbReference>
<dbReference type="Pfam" id="PF05198">
    <property type="entry name" value="IF3_N"/>
    <property type="match status" value="1"/>
</dbReference>
<dbReference type="SUPFAM" id="SSF55200">
    <property type="entry name" value="Translation initiation factor IF3, C-terminal domain"/>
    <property type="match status" value="1"/>
</dbReference>
<dbReference type="SUPFAM" id="SSF54364">
    <property type="entry name" value="Translation initiation factor IF3, N-terminal domain"/>
    <property type="match status" value="1"/>
</dbReference>
<dbReference type="PROSITE" id="PS00938">
    <property type="entry name" value="IF3"/>
    <property type="match status" value="1"/>
</dbReference>
<sequence length="176" mass="20054">MKIIAKKDLFINDEIRVREVRLVGLEGEQLGIKPLSEAQSLADASNVDLVLIQPQAVPPVAKLMDYGKFKFEYQKKQKEQRKKQSVVTVKEVRLSPVIDKGDFETKLRNGRKFLEKGNKVKVSIRFKGRMITHKEIGAKVLADFAEATQDIAIIEQRAKMDGRQMFMQLAPISDKK</sequence>
<protein>
    <recommendedName>
        <fullName evidence="1">Translation initiation factor IF-3</fullName>
    </recommendedName>
</protein>